<protein>
    <recommendedName>
        <fullName evidence="1">2,3-diketo-L-gulonate reductase</fullName>
        <shortName evidence="1">2,3-DKG reductase</shortName>
        <ecNumber evidence="1">1.1.1.130</ecNumber>
    </recommendedName>
    <alternativeName>
        <fullName evidence="1">3-dehydro-L-gulonate 2-dehydrogenase</fullName>
    </alternativeName>
</protein>
<gene>
    <name evidence="1" type="primary">dlgD</name>
    <name type="ordered locus">PM1256</name>
</gene>
<feature type="chain" id="PRO_0000083835" description="2,3-diketo-L-gulonate reductase">
    <location>
        <begin position="1"/>
        <end position="332"/>
    </location>
</feature>
<feature type="active site" description="Proton donor" evidence="1">
    <location>
        <position position="44"/>
    </location>
</feature>
<feature type="binding site" evidence="1">
    <location>
        <begin position="168"/>
        <end position="174"/>
    </location>
    <ligand>
        <name>NAD(+)</name>
        <dbReference type="ChEBI" id="CHEBI:57540"/>
    </ligand>
</feature>
<feature type="binding site" evidence="1">
    <location>
        <begin position="224"/>
        <end position="225"/>
    </location>
    <ligand>
        <name>NAD(+)</name>
        <dbReference type="ChEBI" id="CHEBI:57540"/>
    </ligand>
</feature>
<feature type="binding site" evidence="1">
    <location>
        <begin position="304"/>
        <end position="306"/>
    </location>
    <ligand>
        <name>NAD(+)</name>
        <dbReference type="ChEBI" id="CHEBI:57540"/>
    </ligand>
</feature>
<evidence type="ECO:0000255" key="1">
    <source>
        <dbReference type="HAMAP-Rule" id="MF_00820"/>
    </source>
</evidence>
<dbReference type="EC" id="1.1.1.130" evidence="1"/>
<dbReference type="EMBL" id="AE004439">
    <property type="protein sequence ID" value="AAK03340.1"/>
    <property type="molecule type" value="Genomic_DNA"/>
</dbReference>
<dbReference type="SMR" id="Q9CLH5"/>
<dbReference type="STRING" id="272843.PM1256"/>
<dbReference type="EnsemblBacteria" id="AAK03340">
    <property type="protein sequence ID" value="AAK03340"/>
    <property type="gene ID" value="PM1256"/>
</dbReference>
<dbReference type="KEGG" id="pmu:PM1256"/>
<dbReference type="HOGENOM" id="CLU_040452_4_0_6"/>
<dbReference type="OrthoDB" id="9811519at2"/>
<dbReference type="Proteomes" id="UP000000809">
    <property type="component" value="Chromosome"/>
</dbReference>
<dbReference type="GO" id="GO:0005737">
    <property type="term" value="C:cytoplasm"/>
    <property type="evidence" value="ECO:0007669"/>
    <property type="project" value="UniProtKB-SubCell"/>
</dbReference>
<dbReference type="GO" id="GO:0047559">
    <property type="term" value="F:3-dehydro-L-gulonate 2-dehydrogenase activity"/>
    <property type="evidence" value="ECO:0007669"/>
    <property type="project" value="UniProtKB-UniRule"/>
</dbReference>
<dbReference type="GO" id="GO:0070403">
    <property type="term" value="F:NAD+ binding"/>
    <property type="evidence" value="ECO:0007669"/>
    <property type="project" value="InterPro"/>
</dbReference>
<dbReference type="Gene3D" id="1.10.1530.10">
    <property type="match status" value="1"/>
</dbReference>
<dbReference type="Gene3D" id="3.30.1370.60">
    <property type="entry name" value="Hypothetical oxidoreductase yiak, domain 2"/>
    <property type="match status" value="1"/>
</dbReference>
<dbReference type="Gene3D" id="3.30.60.50">
    <property type="entry name" value="Hypothetical oxidoreductase yiak, domain 3"/>
    <property type="match status" value="1"/>
</dbReference>
<dbReference type="HAMAP" id="MF_00820">
    <property type="entry name" value="Diketo_gul_reduc"/>
    <property type="match status" value="1"/>
</dbReference>
<dbReference type="InterPro" id="IPR023689">
    <property type="entry name" value="Diketo_gul_Rdtase"/>
</dbReference>
<dbReference type="InterPro" id="IPR043144">
    <property type="entry name" value="Mal/L-sulf/L-lact_DH-like_ah"/>
</dbReference>
<dbReference type="InterPro" id="IPR043143">
    <property type="entry name" value="Mal/L-sulf/L-lact_DH-like_NADP"/>
</dbReference>
<dbReference type="InterPro" id="IPR036111">
    <property type="entry name" value="Mal/L-sulfo/L-lacto_DH-like_sf"/>
</dbReference>
<dbReference type="InterPro" id="IPR003767">
    <property type="entry name" value="Malate/L-lactate_DH-like"/>
</dbReference>
<dbReference type="NCBIfam" id="NF009750">
    <property type="entry name" value="PRK13260.1"/>
    <property type="match status" value="1"/>
</dbReference>
<dbReference type="PANTHER" id="PTHR11091:SF3">
    <property type="entry name" value="2,3-DIKETO-L-GULONATE REDUCTASE"/>
    <property type="match status" value="1"/>
</dbReference>
<dbReference type="PANTHER" id="PTHR11091">
    <property type="entry name" value="OXIDOREDUCTASE-RELATED"/>
    <property type="match status" value="1"/>
</dbReference>
<dbReference type="Pfam" id="PF02615">
    <property type="entry name" value="Ldh_2"/>
    <property type="match status" value="1"/>
</dbReference>
<dbReference type="SUPFAM" id="SSF89733">
    <property type="entry name" value="L-sulfolactate dehydrogenase-like"/>
    <property type="match status" value="1"/>
</dbReference>
<name>DLGD_PASMU</name>
<proteinExistence type="inferred from homology"/>
<sequence>MKVSYEALKQEFKRVLLARNVREDIAEECATMFADTTESGVYSHGVNRFPRFISQLEKGDIVPDAEPTKVLSLGAIEQWDAHQAIGNLTAKKMMDRAMEIADQFGIGVVALKNANHWMRGGGYGWQAAEKGYIGICWTNSIAVMPPWGAKECRIGTNPLIIAVPTTPITMVDMSCSMYSYGMLEVHRLAGRQTFVDAGFDDEGNLTRDPGTVEKNRRLLPMGFWKGSGLSIVLDMIATLLSNGLSVAEVTEEKDDEYCVSQIFIAIEVDRLIDGNTKDEKLNKIMDYVRTAERADPDVAIRLPGHEFTAIRAENKANGIPVDETVWEKIKSL</sequence>
<organism>
    <name type="scientific">Pasteurella multocida (strain Pm70)</name>
    <dbReference type="NCBI Taxonomy" id="272843"/>
    <lineage>
        <taxon>Bacteria</taxon>
        <taxon>Pseudomonadati</taxon>
        <taxon>Pseudomonadota</taxon>
        <taxon>Gammaproteobacteria</taxon>
        <taxon>Pasteurellales</taxon>
        <taxon>Pasteurellaceae</taxon>
        <taxon>Pasteurella</taxon>
    </lineage>
</organism>
<keyword id="KW-0963">Cytoplasm</keyword>
<keyword id="KW-0520">NAD</keyword>
<keyword id="KW-0560">Oxidoreductase</keyword>
<keyword id="KW-1185">Reference proteome</keyword>
<reference key="1">
    <citation type="journal article" date="2001" name="Proc. Natl. Acad. Sci. U.S.A.">
        <title>Complete genomic sequence of Pasteurella multocida Pm70.</title>
        <authorList>
            <person name="May B.J."/>
            <person name="Zhang Q."/>
            <person name="Li L.L."/>
            <person name="Paustian M.L."/>
            <person name="Whittam T.S."/>
            <person name="Kapur V."/>
        </authorList>
    </citation>
    <scope>NUCLEOTIDE SEQUENCE [LARGE SCALE GENOMIC DNA]</scope>
    <source>
        <strain>Pm70</strain>
    </source>
</reference>
<accession>Q9CLH5</accession>
<comment type="function">
    <text evidence="1">Catalyzes the reduction of 2,3-diketo-L-gulonate in the presence of NADH, to form 3-keto-L-gulonate.</text>
</comment>
<comment type="catalytic activity">
    <reaction evidence="1">
        <text>3-dehydro-L-gulonate + NAD(+) = 2,3-dioxo-L-gulonate + NADH + H(+)</text>
        <dbReference type="Rhea" id="RHEA:21924"/>
        <dbReference type="ChEBI" id="CHEBI:15378"/>
        <dbReference type="ChEBI" id="CHEBI:57441"/>
        <dbReference type="ChEBI" id="CHEBI:57540"/>
        <dbReference type="ChEBI" id="CHEBI:57655"/>
        <dbReference type="ChEBI" id="CHEBI:57945"/>
        <dbReference type="EC" id="1.1.1.130"/>
    </reaction>
</comment>
<comment type="catalytic activity">
    <reaction evidence="1">
        <text>3-dehydro-L-gulonate + NADP(+) = 2,3-dioxo-L-gulonate + NADPH + H(+)</text>
        <dbReference type="Rhea" id="RHEA:21928"/>
        <dbReference type="ChEBI" id="CHEBI:15378"/>
        <dbReference type="ChEBI" id="CHEBI:57441"/>
        <dbReference type="ChEBI" id="CHEBI:57655"/>
        <dbReference type="ChEBI" id="CHEBI:57783"/>
        <dbReference type="ChEBI" id="CHEBI:58349"/>
        <dbReference type="EC" id="1.1.1.130"/>
    </reaction>
</comment>
<comment type="subunit">
    <text evidence="1">Homodimer.</text>
</comment>
<comment type="subcellular location">
    <subcellularLocation>
        <location evidence="1">Cytoplasm</location>
    </subcellularLocation>
</comment>
<comment type="similarity">
    <text evidence="1">Belongs to the LDH2/MDH2 oxidoreductase family. DlgD subfamily.</text>
</comment>